<comment type="function">
    <text evidence="1">Protein S19 forms a complex with S13 that binds strongly to the 16S ribosomal RNA.</text>
</comment>
<comment type="similarity">
    <text evidence="1">Belongs to the universal ribosomal protein uS19 family.</text>
</comment>
<evidence type="ECO:0000255" key="1">
    <source>
        <dbReference type="HAMAP-Rule" id="MF_00531"/>
    </source>
</evidence>
<evidence type="ECO:0000305" key="2"/>
<reference key="1">
    <citation type="journal article" date="2011" name="J. Bacteriol.">
        <title>Complete genome sequence of the plant growth-promoting endophyte Burkholderia phytofirmans strain PsJN.</title>
        <authorList>
            <person name="Weilharter A."/>
            <person name="Mitter B."/>
            <person name="Shin M.V."/>
            <person name="Chain P.S."/>
            <person name="Nowak J."/>
            <person name="Sessitsch A."/>
        </authorList>
    </citation>
    <scope>NUCLEOTIDE SEQUENCE [LARGE SCALE GENOMIC DNA]</scope>
    <source>
        <strain>DSM 17436 / LMG 22146 / PsJN</strain>
    </source>
</reference>
<sequence>MARSVKKGPFCDAHLLKKVEAAAASRDKKPIKTWSRRSTILPDFIGLTIAVHNGRQHVPVYISENMVGHKLGEFALTRTFKGHAADKKAKK</sequence>
<proteinExistence type="inferred from homology"/>
<dbReference type="EMBL" id="CP001052">
    <property type="protein sequence ID" value="ACD18030.1"/>
    <property type="molecule type" value="Genomic_DNA"/>
</dbReference>
<dbReference type="RefSeq" id="WP_004199273.1">
    <property type="nucleotide sequence ID" value="NC_010681.1"/>
</dbReference>
<dbReference type="SMR" id="B2T747"/>
<dbReference type="STRING" id="398527.Bphyt_3640"/>
<dbReference type="GeneID" id="98107156"/>
<dbReference type="KEGG" id="bpy:Bphyt_3640"/>
<dbReference type="eggNOG" id="COG0185">
    <property type="taxonomic scope" value="Bacteria"/>
</dbReference>
<dbReference type="HOGENOM" id="CLU_144911_0_1_4"/>
<dbReference type="OrthoDB" id="9797833at2"/>
<dbReference type="Proteomes" id="UP000001739">
    <property type="component" value="Chromosome 1"/>
</dbReference>
<dbReference type="GO" id="GO:0005737">
    <property type="term" value="C:cytoplasm"/>
    <property type="evidence" value="ECO:0007669"/>
    <property type="project" value="UniProtKB-ARBA"/>
</dbReference>
<dbReference type="GO" id="GO:0015935">
    <property type="term" value="C:small ribosomal subunit"/>
    <property type="evidence" value="ECO:0007669"/>
    <property type="project" value="InterPro"/>
</dbReference>
<dbReference type="GO" id="GO:0019843">
    <property type="term" value="F:rRNA binding"/>
    <property type="evidence" value="ECO:0007669"/>
    <property type="project" value="UniProtKB-UniRule"/>
</dbReference>
<dbReference type="GO" id="GO:0003735">
    <property type="term" value="F:structural constituent of ribosome"/>
    <property type="evidence" value="ECO:0007669"/>
    <property type="project" value="InterPro"/>
</dbReference>
<dbReference type="GO" id="GO:0000028">
    <property type="term" value="P:ribosomal small subunit assembly"/>
    <property type="evidence" value="ECO:0007669"/>
    <property type="project" value="TreeGrafter"/>
</dbReference>
<dbReference type="GO" id="GO:0006412">
    <property type="term" value="P:translation"/>
    <property type="evidence" value="ECO:0007669"/>
    <property type="project" value="UniProtKB-UniRule"/>
</dbReference>
<dbReference type="FunFam" id="3.30.860.10:FF:000001">
    <property type="entry name" value="30S ribosomal protein S19"/>
    <property type="match status" value="1"/>
</dbReference>
<dbReference type="Gene3D" id="3.30.860.10">
    <property type="entry name" value="30s Ribosomal Protein S19, Chain A"/>
    <property type="match status" value="1"/>
</dbReference>
<dbReference type="HAMAP" id="MF_00531">
    <property type="entry name" value="Ribosomal_uS19"/>
    <property type="match status" value="1"/>
</dbReference>
<dbReference type="InterPro" id="IPR002222">
    <property type="entry name" value="Ribosomal_uS19"/>
</dbReference>
<dbReference type="InterPro" id="IPR005732">
    <property type="entry name" value="Ribosomal_uS19_bac-type"/>
</dbReference>
<dbReference type="InterPro" id="IPR020934">
    <property type="entry name" value="Ribosomal_uS19_CS"/>
</dbReference>
<dbReference type="InterPro" id="IPR023575">
    <property type="entry name" value="Ribosomal_uS19_SF"/>
</dbReference>
<dbReference type="NCBIfam" id="TIGR01050">
    <property type="entry name" value="rpsS_bact"/>
    <property type="match status" value="1"/>
</dbReference>
<dbReference type="PANTHER" id="PTHR11880">
    <property type="entry name" value="RIBOSOMAL PROTEIN S19P FAMILY MEMBER"/>
    <property type="match status" value="1"/>
</dbReference>
<dbReference type="PANTHER" id="PTHR11880:SF8">
    <property type="entry name" value="SMALL RIBOSOMAL SUBUNIT PROTEIN US19M"/>
    <property type="match status" value="1"/>
</dbReference>
<dbReference type="Pfam" id="PF00203">
    <property type="entry name" value="Ribosomal_S19"/>
    <property type="match status" value="1"/>
</dbReference>
<dbReference type="PIRSF" id="PIRSF002144">
    <property type="entry name" value="Ribosomal_S19"/>
    <property type="match status" value="1"/>
</dbReference>
<dbReference type="PRINTS" id="PR00975">
    <property type="entry name" value="RIBOSOMALS19"/>
</dbReference>
<dbReference type="SUPFAM" id="SSF54570">
    <property type="entry name" value="Ribosomal protein S19"/>
    <property type="match status" value="1"/>
</dbReference>
<dbReference type="PROSITE" id="PS00323">
    <property type="entry name" value="RIBOSOMAL_S19"/>
    <property type="match status" value="1"/>
</dbReference>
<gene>
    <name evidence="1" type="primary">rpsS</name>
    <name type="ordered locus">Bphyt_3640</name>
</gene>
<organism>
    <name type="scientific">Paraburkholderia phytofirmans (strain DSM 17436 / LMG 22146 / PsJN)</name>
    <name type="common">Burkholderia phytofirmans</name>
    <dbReference type="NCBI Taxonomy" id="398527"/>
    <lineage>
        <taxon>Bacteria</taxon>
        <taxon>Pseudomonadati</taxon>
        <taxon>Pseudomonadota</taxon>
        <taxon>Betaproteobacteria</taxon>
        <taxon>Burkholderiales</taxon>
        <taxon>Burkholderiaceae</taxon>
        <taxon>Paraburkholderia</taxon>
    </lineage>
</organism>
<accession>B2T747</accession>
<protein>
    <recommendedName>
        <fullName evidence="1">Small ribosomal subunit protein uS19</fullName>
    </recommendedName>
    <alternativeName>
        <fullName evidence="2">30S ribosomal protein S19</fullName>
    </alternativeName>
</protein>
<feature type="chain" id="PRO_1000127943" description="Small ribosomal subunit protein uS19">
    <location>
        <begin position="1"/>
        <end position="91"/>
    </location>
</feature>
<keyword id="KW-0687">Ribonucleoprotein</keyword>
<keyword id="KW-0689">Ribosomal protein</keyword>
<keyword id="KW-0694">RNA-binding</keyword>
<keyword id="KW-0699">rRNA-binding</keyword>
<name>RS19_PARPJ</name>